<organism>
    <name type="scientific">Campylobacter lari (strain RM2100 / D67 / ATCC BAA-1060)</name>
    <dbReference type="NCBI Taxonomy" id="306263"/>
    <lineage>
        <taxon>Bacteria</taxon>
        <taxon>Pseudomonadati</taxon>
        <taxon>Campylobacterota</taxon>
        <taxon>Epsilonproteobacteria</taxon>
        <taxon>Campylobacterales</taxon>
        <taxon>Campylobacteraceae</taxon>
        <taxon>Campylobacter</taxon>
    </lineage>
</organism>
<proteinExistence type="inferred from homology"/>
<keyword id="KW-0012">Acyltransferase</keyword>
<keyword id="KW-0441">Lipid A biosynthesis</keyword>
<keyword id="KW-0444">Lipid biosynthesis</keyword>
<keyword id="KW-0443">Lipid metabolism</keyword>
<keyword id="KW-1185">Reference proteome</keyword>
<keyword id="KW-0677">Repeat</keyword>
<keyword id="KW-0808">Transferase</keyword>
<reference key="1">
    <citation type="journal article" date="2008" name="Foodborne Pathog. Dis.">
        <title>The complete genome sequence and analysis of the human pathogen Campylobacter lari.</title>
        <authorList>
            <person name="Miller W.G."/>
            <person name="Wang G."/>
            <person name="Binnewies T.T."/>
            <person name="Parker C.T."/>
        </authorList>
    </citation>
    <scope>NUCLEOTIDE SEQUENCE [LARGE SCALE GENOMIC DNA]</scope>
    <source>
        <strain>RM2100 / D67 / ATCC BAA-1060</strain>
    </source>
</reference>
<name>LPXD_CAMLR</name>
<comment type="function">
    <text evidence="1">Catalyzes the N-acylation of UDP-3-O-acylglucosamine using 3-hydroxyacyl-ACP as the acyl donor. Is involved in the biosynthesis of lipid A, a phosphorylated glycolipid that anchors the lipopolysaccharide to the outer membrane of the cell.</text>
</comment>
<comment type="catalytic activity">
    <reaction evidence="1">
        <text>a UDP-3-O-[(3R)-3-hydroxyacyl]-alpha-D-glucosamine + a (3R)-hydroxyacyl-[ACP] = a UDP-2-N,3-O-bis[(3R)-3-hydroxyacyl]-alpha-D-glucosamine + holo-[ACP] + H(+)</text>
        <dbReference type="Rhea" id="RHEA:53836"/>
        <dbReference type="Rhea" id="RHEA-COMP:9685"/>
        <dbReference type="Rhea" id="RHEA-COMP:9945"/>
        <dbReference type="ChEBI" id="CHEBI:15378"/>
        <dbReference type="ChEBI" id="CHEBI:64479"/>
        <dbReference type="ChEBI" id="CHEBI:78827"/>
        <dbReference type="ChEBI" id="CHEBI:137740"/>
        <dbReference type="ChEBI" id="CHEBI:137748"/>
        <dbReference type="EC" id="2.3.1.191"/>
    </reaction>
</comment>
<comment type="pathway">
    <text evidence="1">Bacterial outer membrane biogenesis; LPS lipid A biosynthesis.</text>
</comment>
<comment type="subunit">
    <text evidence="1">Homotrimer.</text>
</comment>
<comment type="similarity">
    <text evidence="1">Belongs to the transferase hexapeptide repeat family. LpxD subfamily.</text>
</comment>
<dbReference type="EC" id="2.3.1.191" evidence="1"/>
<dbReference type="EMBL" id="CP000932">
    <property type="protein sequence ID" value="ACM64138.1"/>
    <property type="molecule type" value="Genomic_DNA"/>
</dbReference>
<dbReference type="RefSeq" id="WP_012661521.1">
    <property type="nucleotide sequence ID" value="NC_012039.1"/>
</dbReference>
<dbReference type="SMR" id="B9KGF3"/>
<dbReference type="STRING" id="306263.Cla_0811"/>
<dbReference type="KEGG" id="cla:CLA_0811"/>
<dbReference type="PATRIC" id="fig|306263.5.peg.791"/>
<dbReference type="eggNOG" id="COG1044">
    <property type="taxonomic scope" value="Bacteria"/>
</dbReference>
<dbReference type="HOGENOM" id="CLU_049865_0_0_7"/>
<dbReference type="UniPathway" id="UPA00973"/>
<dbReference type="Proteomes" id="UP000007727">
    <property type="component" value="Chromosome"/>
</dbReference>
<dbReference type="GO" id="GO:0016020">
    <property type="term" value="C:membrane"/>
    <property type="evidence" value="ECO:0007669"/>
    <property type="project" value="GOC"/>
</dbReference>
<dbReference type="GO" id="GO:0016410">
    <property type="term" value="F:N-acyltransferase activity"/>
    <property type="evidence" value="ECO:0007669"/>
    <property type="project" value="InterPro"/>
</dbReference>
<dbReference type="GO" id="GO:0009245">
    <property type="term" value="P:lipid A biosynthetic process"/>
    <property type="evidence" value="ECO:0007669"/>
    <property type="project" value="UniProtKB-UniRule"/>
</dbReference>
<dbReference type="CDD" id="cd03352">
    <property type="entry name" value="LbH_LpxD"/>
    <property type="match status" value="1"/>
</dbReference>
<dbReference type="Gene3D" id="2.160.10.10">
    <property type="entry name" value="Hexapeptide repeat proteins"/>
    <property type="match status" value="1"/>
</dbReference>
<dbReference type="Gene3D" id="3.40.1390.10">
    <property type="entry name" value="MurE/MurF, N-terminal domain"/>
    <property type="match status" value="1"/>
</dbReference>
<dbReference type="HAMAP" id="MF_00523">
    <property type="entry name" value="LpxD"/>
    <property type="match status" value="1"/>
</dbReference>
<dbReference type="InterPro" id="IPR001451">
    <property type="entry name" value="Hexapep"/>
</dbReference>
<dbReference type="InterPro" id="IPR007691">
    <property type="entry name" value="LpxD"/>
</dbReference>
<dbReference type="InterPro" id="IPR011004">
    <property type="entry name" value="Trimer_LpxA-like_sf"/>
</dbReference>
<dbReference type="InterPro" id="IPR020573">
    <property type="entry name" value="UDP_GlcNAc_AcTrfase_non-rep"/>
</dbReference>
<dbReference type="NCBIfam" id="TIGR01853">
    <property type="entry name" value="lipid_A_lpxD"/>
    <property type="match status" value="1"/>
</dbReference>
<dbReference type="NCBIfam" id="NF002060">
    <property type="entry name" value="PRK00892.1"/>
    <property type="match status" value="1"/>
</dbReference>
<dbReference type="PANTHER" id="PTHR43378">
    <property type="entry name" value="UDP-3-O-ACYLGLUCOSAMINE N-ACYLTRANSFERASE"/>
    <property type="match status" value="1"/>
</dbReference>
<dbReference type="PANTHER" id="PTHR43378:SF2">
    <property type="entry name" value="UDP-3-O-ACYLGLUCOSAMINE N-ACYLTRANSFERASE 1, MITOCHONDRIAL-RELATED"/>
    <property type="match status" value="1"/>
</dbReference>
<dbReference type="Pfam" id="PF00132">
    <property type="entry name" value="Hexapep"/>
    <property type="match status" value="2"/>
</dbReference>
<dbReference type="Pfam" id="PF04613">
    <property type="entry name" value="LpxD"/>
    <property type="match status" value="1"/>
</dbReference>
<dbReference type="SUPFAM" id="SSF51161">
    <property type="entry name" value="Trimeric LpxA-like enzymes"/>
    <property type="match status" value="1"/>
</dbReference>
<protein>
    <recommendedName>
        <fullName evidence="1">UDP-3-O-acylglucosamine N-acyltransferase</fullName>
        <ecNumber evidence="1">2.3.1.191</ecNumber>
    </recommendedName>
</protein>
<sequence>MKISEIAKFLGIEYYGDDIEITALNSLNNASFSELSYCDGEKNSKKIASSGAGAILISKEFENLVSKDCVKLVVDNPHLSFALLSKLFAKPLISSEKKQSNIAKSAKIMPNVYIGENVQIADHVVIMAGAYIGDNVSIGEYTIIHPNAVIYNDTKIGKKCHLLANCVIGSDGFGYAHTKNGEHYKIYHNGNVILEDFVEVGACTTIDRAVFESTIIKQGTKIDNLVQVGHNCEIGENCLIVAQSGISGSSILGKNVTMGGQSATSGHLEIGDFATIAARGGVTKNLEGARVYGGFPIMLQKDWLKFQAKIITAFRDKHE</sequence>
<gene>
    <name evidence="1" type="primary">lpxD</name>
    <name type="ordered locus">Cla_0811</name>
</gene>
<accession>B9KGF3</accession>
<evidence type="ECO:0000255" key="1">
    <source>
        <dbReference type="HAMAP-Rule" id="MF_00523"/>
    </source>
</evidence>
<feature type="chain" id="PRO_1000190891" description="UDP-3-O-acylglucosamine N-acyltransferase">
    <location>
        <begin position="1"/>
        <end position="319"/>
    </location>
</feature>
<feature type="active site" description="Proton acceptor" evidence="1">
    <location>
        <position position="230"/>
    </location>
</feature>